<gene>
    <name evidence="1" type="primary">prfA</name>
    <name type="ordered locus">CLD_0647</name>
</gene>
<reference key="1">
    <citation type="journal article" date="2007" name="PLoS ONE">
        <title>Analysis of the neurotoxin complex genes in Clostridium botulinum A1-A4 and B1 strains: BoNT/A3, /Ba4 and /B1 clusters are located within plasmids.</title>
        <authorList>
            <person name="Smith T.J."/>
            <person name="Hill K.K."/>
            <person name="Foley B.T."/>
            <person name="Detter J.C."/>
            <person name="Munk A.C."/>
            <person name="Bruce D.C."/>
            <person name="Doggett N.A."/>
            <person name="Smith L.A."/>
            <person name="Marks J.D."/>
            <person name="Xie G."/>
            <person name="Brettin T.S."/>
        </authorList>
    </citation>
    <scope>NUCLEOTIDE SEQUENCE [LARGE SCALE GENOMIC DNA]</scope>
    <source>
        <strain>Okra / Type B1</strain>
    </source>
</reference>
<keyword id="KW-0963">Cytoplasm</keyword>
<keyword id="KW-0488">Methylation</keyword>
<keyword id="KW-0648">Protein biosynthesis</keyword>
<evidence type="ECO:0000255" key="1">
    <source>
        <dbReference type="HAMAP-Rule" id="MF_00093"/>
    </source>
</evidence>
<feature type="chain" id="PRO_1000093443" description="Peptide chain release factor 1">
    <location>
        <begin position="1"/>
        <end position="358"/>
    </location>
</feature>
<feature type="modified residue" description="N5-methylglutamine" evidence="1">
    <location>
        <position position="233"/>
    </location>
</feature>
<organism>
    <name type="scientific">Clostridium botulinum (strain Okra / Type B1)</name>
    <dbReference type="NCBI Taxonomy" id="498213"/>
    <lineage>
        <taxon>Bacteria</taxon>
        <taxon>Bacillati</taxon>
        <taxon>Bacillota</taxon>
        <taxon>Clostridia</taxon>
        <taxon>Eubacteriales</taxon>
        <taxon>Clostridiaceae</taxon>
        <taxon>Clostridium</taxon>
    </lineage>
</organism>
<sequence>MLERLNFIENKYEELSNKISDPSVMANQKEWQKLCKEHADLEIIVNTYREYKKAQEDLESDKEMLKEESDKELREMAQEEIKELTLKLEDLERELTILLLPKDPNDDKDVFIEIRAGAGGEEAALFASNLLRMYTRYAERKNWKVETMSLNATDIGGFKEVTVAIKGKGAYSRLKYESGVHRVQRVPDTESSGRIHTSTATVAVLPEVDDVDININANDLRIDVYRASGHGGQCVNTTDSAVRITHLPTGLVVTCQDEKSQLKNKEKAMKVLKARLFEAAEAERAASIAEDRKSQVGTGDRSERIRTYNYPQGRITDHRIGLTLYKLETFLDGDIDEVIEALVTEDQAEKMKDLGRVN</sequence>
<proteinExistence type="inferred from homology"/>
<protein>
    <recommendedName>
        <fullName evidence="1">Peptide chain release factor 1</fullName>
        <shortName evidence="1">RF-1</shortName>
    </recommendedName>
</protein>
<dbReference type="EMBL" id="CP000939">
    <property type="protein sequence ID" value="ACA44507.1"/>
    <property type="molecule type" value="Genomic_DNA"/>
</dbReference>
<dbReference type="SMR" id="B1IE21"/>
<dbReference type="KEGG" id="cbb:CLD_0647"/>
<dbReference type="HOGENOM" id="CLU_036856_0_1_9"/>
<dbReference type="Proteomes" id="UP000008541">
    <property type="component" value="Chromosome"/>
</dbReference>
<dbReference type="GO" id="GO:0005737">
    <property type="term" value="C:cytoplasm"/>
    <property type="evidence" value="ECO:0007669"/>
    <property type="project" value="UniProtKB-SubCell"/>
</dbReference>
<dbReference type="GO" id="GO:0016149">
    <property type="term" value="F:translation release factor activity, codon specific"/>
    <property type="evidence" value="ECO:0007669"/>
    <property type="project" value="UniProtKB-UniRule"/>
</dbReference>
<dbReference type="FunFam" id="3.30.160.20:FF:000004">
    <property type="entry name" value="Peptide chain release factor 1"/>
    <property type="match status" value="1"/>
</dbReference>
<dbReference type="FunFam" id="3.30.70.1660:FF:000002">
    <property type="entry name" value="Peptide chain release factor 1"/>
    <property type="match status" value="1"/>
</dbReference>
<dbReference type="FunFam" id="3.30.70.1660:FF:000004">
    <property type="entry name" value="Peptide chain release factor 1"/>
    <property type="match status" value="1"/>
</dbReference>
<dbReference type="Gene3D" id="3.30.160.20">
    <property type="match status" value="1"/>
</dbReference>
<dbReference type="Gene3D" id="3.30.70.1660">
    <property type="match status" value="1"/>
</dbReference>
<dbReference type="Gene3D" id="6.10.140.1950">
    <property type="match status" value="1"/>
</dbReference>
<dbReference type="HAMAP" id="MF_00093">
    <property type="entry name" value="Rel_fac_1"/>
    <property type="match status" value="1"/>
</dbReference>
<dbReference type="InterPro" id="IPR005139">
    <property type="entry name" value="PCRF"/>
</dbReference>
<dbReference type="InterPro" id="IPR000352">
    <property type="entry name" value="Pep_chain_release_fac_I"/>
</dbReference>
<dbReference type="InterPro" id="IPR045853">
    <property type="entry name" value="Pep_chain_release_fac_I_sf"/>
</dbReference>
<dbReference type="InterPro" id="IPR050057">
    <property type="entry name" value="Prokaryotic/Mito_RF"/>
</dbReference>
<dbReference type="InterPro" id="IPR004373">
    <property type="entry name" value="RF-1"/>
</dbReference>
<dbReference type="NCBIfam" id="TIGR00019">
    <property type="entry name" value="prfA"/>
    <property type="match status" value="1"/>
</dbReference>
<dbReference type="NCBIfam" id="NF001859">
    <property type="entry name" value="PRK00591.1"/>
    <property type="match status" value="1"/>
</dbReference>
<dbReference type="PANTHER" id="PTHR43804">
    <property type="entry name" value="LD18447P"/>
    <property type="match status" value="1"/>
</dbReference>
<dbReference type="PANTHER" id="PTHR43804:SF7">
    <property type="entry name" value="LD18447P"/>
    <property type="match status" value="1"/>
</dbReference>
<dbReference type="Pfam" id="PF03462">
    <property type="entry name" value="PCRF"/>
    <property type="match status" value="1"/>
</dbReference>
<dbReference type="Pfam" id="PF00472">
    <property type="entry name" value="RF-1"/>
    <property type="match status" value="1"/>
</dbReference>
<dbReference type="SMART" id="SM00937">
    <property type="entry name" value="PCRF"/>
    <property type="match status" value="1"/>
</dbReference>
<dbReference type="SUPFAM" id="SSF75620">
    <property type="entry name" value="Release factor"/>
    <property type="match status" value="1"/>
</dbReference>
<dbReference type="PROSITE" id="PS00745">
    <property type="entry name" value="RF_PROK_I"/>
    <property type="match status" value="1"/>
</dbReference>
<accession>B1IE21</accession>
<name>RF1_CLOBK</name>
<comment type="function">
    <text evidence="1">Peptide chain release factor 1 directs the termination of translation in response to the peptide chain termination codons UAG and UAA.</text>
</comment>
<comment type="subcellular location">
    <subcellularLocation>
        <location evidence="1">Cytoplasm</location>
    </subcellularLocation>
</comment>
<comment type="PTM">
    <text evidence="1">Methylated by PrmC. Methylation increases the termination efficiency of RF1.</text>
</comment>
<comment type="similarity">
    <text evidence="1">Belongs to the prokaryotic/mitochondrial release factor family.</text>
</comment>